<name>MURQ_KLEAE</name>
<accession>Q8GC81</accession>
<reference key="1">
    <citation type="journal article" date="2005" name="J. Bacteriol.">
        <title>The eefABC multidrug efflux pump operon is repressed by H-NS in Enterobacter aerogenes.</title>
        <authorList>
            <person name="Masi M."/>
            <person name="Pages J.-M."/>
            <person name="Villard C."/>
            <person name="Pradel E."/>
        </authorList>
    </citation>
    <scope>NUCLEOTIDE SEQUENCE [GENOMIC DNA]</scope>
    <source>
        <strain>ATCC 15038 / NBRC 12010</strain>
    </source>
</reference>
<keyword id="KW-0119">Carbohydrate metabolism</keyword>
<keyword id="KW-0456">Lyase</keyword>
<comment type="function">
    <text evidence="1">Specifically catalyzes the cleavage of the D-lactyl ether substituent of MurNAc 6-phosphate, producing GlcNAc 6-phosphate and D-lactate. Together with AnmK, is also required for the utilization of anhydro-N-acetylmuramic acid (anhMurNAc) either imported from the medium or derived from its own cell wall murein, and thus plays a role in cell wall recycling.</text>
</comment>
<comment type="catalytic activity">
    <reaction evidence="1">
        <text>N-acetyl-D-muramate 6-phosphate + H2O = N-acetyl-D-glucosamine 6-phosphate + (R)-lactate</text>
        <dbReference type="Rhea" id="RHEA:26410"/>
        <dbReference type="ChEBI" id="CHEBI:15377"/>
        <dbReference type="ChEBI" id="CHEBI:16004"/>
        <dbReference type="ChEBI" id="CHEBI:57513"/>
        <dbReference type="ChEBI" id="CHEBI:58722"/>
        <dbReference type="EC" id="4.2.1.126"/>
    </reaction>
</comment>
<comment type="pathway">
    <text evidence="1">Amino-sugar metabolism; 1,6-anhydro-N-acetylmuramate degradation.</text>
</comment>
<comment type="pathway">
    <text evidence="1">Amino-sugar metabolism; N-acetylmuramate degradation.</text>
</comment>
<comment type="pathway">
    <text evidence="1">Cell wall biogenesis; peptidoglycan recycling.</text>
</comment>
<comment type="subunit">
    <text evidence="1">Homodimer.</text>
</comment>
<comment type="induction">
    <text evidence="1">Induced by MurNAc 6-phosphate that releases the repressor MurR from the DNA. Repressed by MurR in the absence of MurNAc 6-phosphate.</text>
</comment>
<comment type="miscellaneous">
    <text evidence="1">A lyase-type mechanism (elimination/hydration) is suggested for the cleavage of the lactyl ether bond of MurNAc 6-phosphate, with the formation of an alpha,beta-unsaturated aldehyde intermediate with (E)-stereochemistry, followed by the syn addition of water to give product.</text>
</comment>
<comment type="similarity">
    <text evidence="1">Belongs to the GCKR-like family. MurNAc-6-P etherase subfamily.</text>
</comment>
<organism>
    <name type="scientific">Klebsiella aerogenes</name>
    <name type="common">Enterobacter aerogenes</name>
    <dbReference type="NCBI Taxonomy" id="548"/>
    <lineage>
        <taxon>Bacteria</taxon>
        <taxon>Pseudomonadati</taxon>
        <taxon>Pseudomonadota</taxon>
        <taxon>Gammaproteobacteria</taxon>
        <taxon>Enterobacterales</taxon>
        <taxon>Enterobacteriaceae</taxon>
        <taxon>Klebsiella/Raoultella group</taxon>
        <taxon>Klebsiella</taxon>
    </lineage>
</organism>
<feature type="chain" id="PRO_0000249620" description="N-acetylmuramic acid 6-phosphate etherase">
    <location>
        <begin position="1"/>
        <end position="300"/>
    </location>
</feature>
<feature type="domain" description="SIS" evidence="1">
    <location>
        <begin position="57"/>
        <end position="220"/>
    </location>
</feature>
<feature type="active site" description="Proton donor" evidence="1">
    <location>
        <position position="85"/>
    </location>
</feature>
<feature type="active site" evidence="1">
    <location>
        <position position="116"/>
    </location>
</feature>
<sequence>MSIDLSKLLTERRNANSANIDTLSTVDMLTVINQEDQQVAQAITPYLPQIAEVVDKVAAALRAGGRLIYIGAGTSGRLGILDASECPPTFGTRPEQVVGIIAGGHKAILSAVENVEDNKAQGAMDLQNLNFSNRDVLVGLAASGRTPYVIGAMEYAHSQNAFVAIVSCNPHGEMAQLADVAITPVVGPEVVTGSTRLKAGTAQKLVLNMISTGAMIRIGKVYSNLMVDVEATNAKLIERQVSIVMEATDCDRATAQNALDACGRHCKTAIVMVLADLSAAEAQSLLAKNNGYIRKALSNT</sequence>
<protein>
    <recommendedName>
        <fullName evidence="1">N-acetylmuramic acid 6-phosphate etherase</fullName>
        <shortName evidence="1">MurNAc-6-P etherase</shortName>
        <ecNumber evidence="1">4.2.1.126</ecNumber>
    </recommendedName>
    <alternativeName>
        <fullName evidence="1">N-acetylmuramic acid 6-phosphate hydrolase</fullName>
    </alternativeName>
    <alternativeName>
        <fullName evidence="1">N-acetylmuramic acid 6-phosphate lyase</fullName>
    </alternativeName>
</protein>
<evidence type="ECO:0000255" key="1">
    <source>
        <dbReference type="HAMAP-Rule" id="MF_00068"/>
    </source>
</evidence>
<proteinExistence type="inferred from homology"/>
<dbReference type="EC" id="4.2.1.126" evidence="1"/>
<dbReference type="EMBL" id="AJ508047">
    <property type="protein sequence ID" value="CAD48864.1"/>
    <property type="molecule type" value="Genomic_DNA"/>
</dbReference>
<dbReference type="RefSeq" id="WP_015369100.1">
    <property type="nucleotide sequence ID" value="NZ_WPHE01000006.1"/>
</dbReference>
<dbReference type="SMR" id="Q8GC81"/>
<dbReference type="STRING" id="548.EAG7_04172"/>
<dbReference type="GeneID" id="93314467"/>
<dbReference type="OMA" id="CPPTFCT"/>
<dbReference type="UniPathway" id="UPA00342"/>
<dbReference type="UniPathway" id="UPA00343"/>
<dbReference type="UniPathway" id="UPA00544"/>
<dbReference type="GO" id="GO:0097367">
    <property type="term" value="F:carbohydrate derivative binding"/>
    <property type="evidence" value="ECO:0007669"/>
    <property type="project" value="InterPro"/>
</dbReference>
<dbReference type="GO" id="GO:0016835">
    <property type="term" value="F:carbon-oxygen lyase activity"/>
    <property type="evidence" value="ECO:0007669"/>
    <property type="project" value="UniProtKB-UniRule"/>
</dbReference>
<dbReference type="GO" id="GO:0016803">
    <property type="term" value="F:ether hydrolase activity"/>
    <property type="evidence" value="ECO:0007669"/>
    <property type="project" value="TreeGrafter"/>
</dbReference>
<dbReference type="GO" id="GO:0097175">
    <property type="term" value="P:1,6-anhydro-N-acetyl-beta-muramic acid catabolic process"/>
    <property type="evidence" value="ECO:0007669"/>
    <property type="project" value="UniProtKB-UniRule"/>
</dbReference>
<dbReference type="GO" id="GO:0046348">
    <property type="term" value="P:amino sugar catabolic process"/>
    <property type="evidence" value="ECO:0007669"/>
    <property type="project" value="InterPro"/>
</dbReference>
<dbReference type="GO" id="GO:0097173">
    <property type="term" value="P:N-acetylmuramic acid catabolic process"/>
    <property type="evidence" value="ECO:0007669"/>
    <property type="project" value="UniProtKB-UniPathway"/>
</dbReference>
<dbReference type="GO" id="GO:0009254">
    <property type="term" value="P:peptidoglycan turnover"/>
    <property type="evidence" value="ECO:0007669"/>
    <property type="project" value="UniProtKB-UniRule"/>
</dbReference>
<dbReference type="CDD" id="cd05007">
    <property type="entry name" value="SIS_Etherase"/>
    <property type="match status" value="1"/>
</dbReference>
<dbReference type="FunFam" id="1.10.8.1080:FF:000001">
    <property type="entry name" value="N-acetylmuramic acid 6-phosphate etherase"/>
    <property type="match status" value="1"/>
</dbReference>
<dbReference type="FunFam" id="3.40.50.10490:FF:000014">
    <property type="entry name" value="N-acetylmuramic acid 6-phosphate etherase"/>
    <property type="match status" value="1"/>
</dbReference>
<dbReference type="Gene3D" id="1.10.8.1080">
    <property type="match status" value="1"/>
</dbReference>
<dbReference type="Gene3D" id="3.40.50.10490">
    <property type="entry name" value="Glucose-6-phosphate isomerase like protein, domain 1"/>
    <property type="match status" value="1"/>
</dbReference>
<dbReference type="HAMAP" id="MF_00068">
    <property type="entry name" value="MurQ"/>
    <property type="match status" value="1"/>
</dbReference>
<dbReference type="InterPro" id="IPR005488">
    <property type="entry name" value="Etherase_MurQ"/>
</dbReference>
<dbReference type="InterPro" id="IPR005486">
    <property type="entry name" value="Glucokinase_regulatory_CS"/>
</dbReference>
<dbReference type="InterPro" id="IPR040190">
    <property type="entry name" value="MURQ/GCKR"/>
</dbReference>
<dbReference type="InterPro" id="IPR000408">
    <property type="entry name" value="Reg_chr_condens"/>
</dbReference>
<dbReference type="InterPro" id="IPR001347">
    <property type="entry name" value="SIS_dom"/>
</dbReference>
<dbReference type="InterPro" id="IPR046348">
    <property type="entry name" value="SIS_dom_sf"/>
</dbReference>
<dbReference type="NCBIfam" id="TIGR00274">
    <property type="entry name" value="N-acetylmuramic acid 6-phosphate etherase"/>
    <property type="match status" value="1"/>
</dbReference>
<dbReference type="NCBIfam" id="NF003915">
    <property type="entry name" value="PRK05441.1"/>
    <property type="match status" value="1"/>
</dbReference>
<dbReference type="NCBIfam" id="NF009222">
    <property type="entry name" value="PRK12570.1"/>
    <property type="match status" value="1"/>
</dbReference>
<dbReference type="PANTHER" id="PTHR10088">
    <property type="entry name" value="GLUCOKINASE REGULATORY PROTEIN"/>
    <property type="match status" value="1"/>
</dbReference>
<dbReference type="PANTHER" id="PTHR10088:SF4">
    <property type="entry name" value="GLUCOKINASE REGULATORY PROTEIN"/>
    <property type="match status" value="1"/>
</dbReference>
<dbReference type="Pfam" id="PF22645">
    <property type="entry name" value="GKRP_SIS_N"/>
    <property type="match status" value="1"/>
</dbReference>
<dbReference type="SUPFAM" id="SSF53697">
    <property type="entry name" value="SIS domain"/>
    <property type="match status" value="1"/>
</dbReference>
<dbReference type="PROSITE" id="PS01272">
    <property type="entry name" value="GCKR"/>
    <property type="match status" value="1"/>
</dbReference>
<dbReference type="PROSITE" id="PS51464">
    <property type="entry name" value="SIS"/>
    <property type="match status" value="1"/>
</dbReference>
<gene>
    <name evidence="1" type="primary">murQ</name>
</gene>